<sequence length="396" mass="44087">MPAVRIVILAICCGLLLVPVRCCGPGRGPVGRRRYMRKLVPLHYKQFVPNVPEKTLGASGKSEGKIHRGSERFIELVPNYNPDIIFKDEEKTGADRLMTERCKDRVNALAISVMNMWPGVKLRVTEGWDEDGHHAHDSLHYEGRALDITTSDRDRNKYGMLARLAVEAGFDWVYYESKAHIHVSVKADNSLGVRSGGCFPGTAMVMMGTGERKPLSELKIGDTVYTTDETGQLITSVVLLFLHRNPYKTATFVLIEAEGHPSKLLVTPNHLLFIQSSSSAGFLPTFAYRVQIGDLVQIYVNGTQVQSSKVVRVSLEEQTGVYAPMTEHGTLLVDGVLTSCYATVESHTLAHVSLAPLRLFQGIASMLPDLDMSDGVHWYCHILYVLAKYVLWWDMP</sequence>
<feature type="signal peptide" evidence="5">
    <location>
        <begin position="1"/>
        <end position="22"/>
    </location>
</feature>
<feature type="chain" id="PRO_0000013250" description="Desert hedgehog protein A">
    <location>
        <begin position="23"/>
        <end position="396"/>
    </location>
</feature>
<feature type="chain" id="PRO_0000013251" description="Desert hedgehog protein A N-product">
    <location>
        <begin position="23"/>
        <end position="197"/>
    </location>
</feature>
<feature type="binding site" evidence="1">
    <location>
        <position position="89"/>
    </location>
    <ligand>
        <name>Ca(2+)</name>
        <dbReference type="ChEBI" id="CHEBI:29108"/>
        <label>1</label>
    </ligand>
</feature>
<feature type="binding site" evidence="1">
    <location>
        <position position="90"/>
    </location>
    <ligand>
        <name>Ca(2+)</name>
        <dbReference type="ChEBI" id="CHEBI:29108"/>
        <label>1</label>
    </ligand>
</feature>
<feature type="binding site" evidence="1">
    <location>
        <position position="90"/>
    </location>
    <ligand>
        <name>Ca(2+)</name>
        <dbReference type="ChEBI" id="CHEBI:29108"/>
        <label>2</label>
    </ligand>
</feature>
<feature type="binding site" evidence="1">
    <location>
        <position position="95"/>
    </location>
    <ligand>
        <name>Ca(2+)</name>
        <dbReference type="ChEBI" id="CHEBI:29108"/>
        <label>1</label>
    </ligand>
</feature>
<feature type="binding site" evidence="1">
    <location>
        <position position="125"/>
    </location>
    <ligand>
        <name>Ca(2+)</name>
        <dbReference type="ChEBI" id="CHEBI:29108"/>
        <label>1</label>
    </ligand>
</feature>
<feature type="binding site" evidence="1">
    <location>
        <position position="126"/>
    </location>
    <ligand>
        <name>Ca(2+)</name>
        <dbReference type="ChEBI" id="CHEBI:29108"/>
        <label>1</label>
    </ligand>
</feature>
<feature type="binding site" evidence="1">
    <location>
        <position position="126"/>
    </location>
    <ligand>
        <name>Ca(2+)</name>
        <dbReference type="ChEBI" id="CHEBI:29108"/>
        <label>2</label>
    </ligand>
</feature>
<feature type="binding site" evidence="1">
    <location>
        <position position="129"/>
    </location>
    <ligand>
        <name>Ca(2+)</name>
        <dbReference type="ChEBI" id="CHEBI:29108"/>
        <label>2</label>
    </ligand>
</feature>
<feature type="binding site" evidence="1">
    <location>
        <position position="131"/>
    </location>
    <ligand>
        <name>Ca(2+)</name>
        <dbReference type="ChEBI" id="CHEBI:29108"/>
        <label>2</label>
    </ligand>
</feature>
<feature type="binding site" evidence="1">
    <location>
        <position position="140"/>
    </location>
    <ligand>
        <name>Zn(2+)</name>
        <dbReference type="ChEBI" id="CHEBI:29105"/>
    </ligand>
</feature>
<feature type="binding site" evidence="1">
    <location>
        <position position="147"/>
    </location>
    <ligand>
        <name>Zn(2+)</name>
        <dbReference type="ChEBI" id="CHEBI:29105"/>
    </ligand>
</feature>
<feature type="binding site" evidence="1">
    <location>
        <position position="182"/>
    </location>
    <ligand>
        <name>Zn(2+)</name>
        <dbReference type="ChEBI" id="CHEBI:29105"/>
    </ligand>
</feature>
<feature type="site" description="Cleavage; by autolysis" evidence="2">
    <location>
        <begin position="197"/>
        <end position="198"/>
    </location>
</feature>
<feature type="site" description="Involved in auto-cleavage" evidence="2">
    <location>
        <position position="267"/>
    </location>
</feature>
<feature type="site" description="Essential for auto-cleavage" evidence="2">
    <location>
        <position position="270"/>
    </location>
</feature>
<feature type="lipid moiety-binding region" description="N-palmitoyl cysteine" evidence="1">
    <location>
        <position position="23"/>
    </location>
</feature>
<feature type="lipid moiety-binding region" description="Cholesterol glycine ester" evidence="4">
    <location>
        <position position="197"/>
    </location>
</feature>
<protein>
    <recommendedName>
        <fullName evidence="7">Desert hedgehog protein A</fullName>
        <ecNumber evidence="4">3.1.-.-</ecNumber>
    </recommendedName>
    <alternativeName>
        <fullName>Cephalic hedgehog protein</fullName>
    </alternativeName>
    <alternativeName>
        <fullName>Desert hedgehog protein 1</fullName>
        <shortName>DHH-1</shortName>
    </alternativeName>
    <alternativeName>
        <fullName>X-CHH</fullName>
    </alternativeName>
    <component>
        <recommendedName>
            <fullName>Desert hedgehog protein A N-product</fullName>
        </recommendedName>
    </component>
</protein>
<accession>Q91610</accession>
<organism>
    <name type="scientific">Xenopus laevis</name>
    <name type="common">African clawed frog</name>
    <dbReference type="NCBI Taxonomy" id="8355"/>
    <lineage>
        <taxon>Eukaryota</taxon>
        <taxon>Metazoa</taxon>
        <taxon>Chordata</taxon>
        <taxon>Craniata</taxon>
        <taxon>Vertebrata</taxon>
        <taxon>Euteleostomi</taxon>
        <taxon>Amphibia</taxon>
        <taxon>Batrachia</taxon>
        <taxon>Anura</taxon>
        <taxon>Pipoidea</taxon>
        <taxon>Pipidae</taxon>
        <taxon>Xenopodinae</taxon>
        <taxon>Xenopus</taxon>
        <taxon>Xenopus</taxon>
    </lineage>
</organism>
<evidence type="ECO:0000250" key="1">
    <source>
        <dbReference type="UniProtKB" id="O43323"/>
    </source>
</evidence>
<evidence type="ECO:0000250" key="2">
    <source>
        <dbReference type="UniProtKB" id="Q02936"/>
    </source>
</evidence>
<evidence type="ECO:0000250" key="3">
    <source>
        <dbReference type="UniProtKB" id="Q15465"/>
    </source>
</evidence>
<evidence type="ECO:0000250" key="4">
    <source>
        <dbReference type="UniProtKB" id="Q62226"/>
    </source>
</evidence>
<evidence type="ECO:0000255" key="5"/>
<evidence type="ECO:0000269" key="6">
    <source>
    </source>
</evidence>
<evidence type="ECO:0000305" key="7"/>
<name>DHHA_XENLA</name>
<gene>
    <name type="primary">dhh-a</name>
    <name type="synonym">chh</name>
</gene>
<proteinExistence type="evidence at transcript level"/>
<comment type="function">
    <molecule>Desert hedgehog protein A</molecule>
    <text evidence="4">The C-terminal part of the desert hedgehog protein precursor displays an autoproteolysis and a cholesterol transferase activity (By similarity). Both activities result in the cleavage of the full-length protein into two parts (DhhN and DhhC) followed by the covalent attachment of a cholesterol moiety to the C-terminal of the newly generated DhhN (By similarity). Both activities occur in the endoplasmic reticulum (By similarity).</text>
</comment>
<comment type="function">
    <molecule>Desert hedgehog protein A N-product</molecule>
    <text evidence="1 4 6">The dually lipidated desert hedgehog protein N-product (DhhNp) is essential for a variety of patterning events during development (By similarity). Involved in the early induction and patterning of anterodorsal ectoderm, nervous system and somites. Induces ectopic cement gland formation in embryos (PubMed:7671800). Binds to the patched (PTCH1) receptor, which functions in association with smoothened (SMO), to activate the transcription of target genes (By similarity).</text>
</comment>
<comment type="catalytic activity">
    <molecule>Desert hedgehog protein A</molecule>
    <reaction evidence="4">
        <text>glycyl-L-cysteinyl-[protein] + cholesterol + H(+) = [protein]-C-terminal glycyl cholesterol ester + N-terminal L-cysteinyl-[protein]</text>
        <dbReference type="Rhea" id="RHEA:59504"/>
        <dbReference type="Rhea" id="RHEA-COMP:12707"/>
        <dbReference type="Rhea" id="RHEA-COMP:15369"/>
        <dbReference type="Rhea" id="RHEA-COMP:15374"/>
        <dbReference type="ChEBI" id="CHEBI:15378"/>
        <dbReference type="ChEBI" id="CHEBI:16113"/>
        <dbReference type="ChEBI" id="CHEBI:65250"/>
        <dbReference type="ChEBI" id="CHEBI:143135"/>
        <dbReference type="ChEBI" id="CHEBI:143140"/>
    </reaction>
    <physiologicalReaction direction="left-to-right" evidence="4">
        <dbReference type="Rhea" id="RHEA:59505"/>
    </physiologicalReaction>
</comment>
<comment type="subunit">
    <molecule>Desert hedgehog protein A N-product</molecule>
    <text evidence="3">Multimer.</text>
</comment>
<comment type="subunit">
    <text evidence="1">Interacts with BOC and CDON. Interacts with HHIP.</text>
</comment>
<comment type="subcellular location">
    <molecule>Desert hedgehog protein A N-product</molecule>
    <subcellularLocation>
        <location evidence="4">Cell membrane</location>
        <topology evidence="4">Lipid-anchor</topology>
    </subcellularLocation>
</comment>
<comment type="subcellular location">
    <molecule>Desert hedgehog protein A</molecule>
    <subcellularLocation>
        <location evidence="3">Endoplasmic reticulum membrane</location>
    </subcellularLocation>
    <subcellularLocation>
        <location evidence="3">Golgi apparatus membrane</location>
    </subcellularLocation>
    <subcellularLocation>
        <location evidence="1">Secreted</location>
    </subcellularLocation>
    <subcellularLocation>
        <location evidence="1">Cell membrane</location>
    </subcellularLocation>
    <text evidence="3">Co-localizes with HHAT in the ER and Golgi membrane.</text>
</comment>
<comment type="tissue specificity">
    <text evidence="6">Expressed in the marginal zone at early gastrulation. In the neurula, expression is restricted to anterior structures, encompassing both neural plate and endodermal cells. Expressed on the inner surface of the pharynx at the early tadpole stage.</text>
</comment>
<comment type="developmental stage">
    <text evidence="6">First expressed during early gastrulation. Expression peaks during neural induction and early organogenesis.</text>
</comment>
<comment type="domain">
    <molecule>Desert hedgehog protein A N-product</molecule>
    <text evidence="1">Binds calcium and zinc ions; this stabilizes the protein fold and is essential for protein-protein interactions mediated by this domain.</text>
</comment>
<comment type="domain">
    <molecule>Desert hedgehog protein A</molecule>
    <text evidence="1">The C-terminal domain regulates the auto-processing and controls the juxtacrine signaling.</text>
</comment>
<comment type="PTM">
    <molecule>Desert hedgehog protein A</molecule>
    <text evidence="1 4">Partially autoproteolyzed (By similarity). The C-terminal domain displays an autoproteolysis activity and a cholesterol transferase activity (By similarity). Both activities result in the cleavage of the full-length protein and covalent attachment of a cholesterol moiety to the C-terminal of the newly generated N-terminal fragment (DhhN) (By similarity).</text>
</comment>
<comment type="PTM">
    <molecule>Desert hedgehog protein A N-product</molecule>
    <text evidence="4">N-palmitoylation by HHAT of DhhN is required for desert hedgehog protein N-product multimerization and full activity (By similarity).</text>
</comment>
<comment type="similarity">
    <text evidence="7">Belongs to the hedgehog family.</text>
</comment>
<keyword id="KW-0068">Autocatalytic cleavage</keyword>
<keyword id="KW-0106">Calcium</keyword>
<keyword id="KW-1003">Cell membrane</keyword>
<keyword id="KW-0217">Developmental protein</keyword>
<keyword id="KW-0256">Endoplasmic reticulum</keyword>
<keyword id="KW-0333">Golgi apparatus</keyword>
<keyword id="KW-0378">Hydrolase</keyword>
<keyword id="KW-0449">Lipoprotein</keyword>
<keyword id="KW-0472">Membrane</keyword>
<keyword id="KW-0479">Metal-binding</keyword>
<keyword id="KW-0564">Palmitate</keyword>
<keyword id="KW-0645">Protease</keyword>
<keyword id="KW-1185">Reference proteome</keyword>
<keyword id="KW-0964">Secreted</keyword>
<keyword id="KW-0732">Signal</keyword>
<keyword id="KW-0808">Transferase</keyword>
<keyword id="KW-0862">Zinc</keyword>
<reference key="1">
    <citation type="journal article" date="1995" name="Development">
        <title>Distinct expression and shared activities of members of the hedgehog gene family of Xenopus laevis.</title>
        <authorList>
            <person name="Ekker S.C."/>
            <person name="McGrew L.L."/>
            <person name="Lai C.-J."/>
            <person name="Lee J.J."/>
            <person name="von Kessler D.P."/>
            <person name="Moon R.T."/>
            <person name="Beachy P.A."/>
        </authorList>
    </citation>
    <scope>NUCLEOTIDE SEQUENCE [MRNA]</scope>
    <scope>FUNCTION</scope>
    <scope>TISSUE SPECIFICITY</scope>
    <scope>DEVELOPMENTAL STAGE</scope>
    <source>
        <tissue>Embryo</tissue>
    </source>
</reference>
<dbReference type="EC" id="3.1.-.-" evidence="4"/>
<dbReference type="EMBL" id="U26349">
    <property type="protein sequence ID" value="AAA85163.1"/>
    <property type="molecule type" value="mRNA"/>
</dbReference>
<dbReference type="RefSeq" id="NP_001079260.1">
    <property type="nucleotide sequence ID" value="NM_001085791.1"/>
</dbReference>
<dbReference type="SMR" id="Q91610"/>
<dbReference type="MEROPS" id="C46.004"/>
<dbReference type="GeneID" id="378538"/>
<dbReference type="KEGG" id="xla:378538"/>
<dbReference type="AGR" id="Xenbase:XB-GENE-864981"/>
<dbReference type="CTD" id="378538"/>
<dbReference type="Xenbase" id="XB-GENE-864981">
    <property type="gene designation" value="dhh.L"/>
</dbReference>
<dbReference type="OMA" id="NSMAIRA"/>
<dbReference type="OrthoDB" id="5212at2759"/>
<dbReference type="Proteomes" id="UP000186698">
    <property type="component" value="Chromosome 2L"/>
</dbReference>
<dbReference type="Bgee" id="378538">
    <property type="expression patterns" value="Expressed in camera-type eye and 13 other cell types or tissues"/>
</dbReference>
<dbReference type="GO" id="GO:0005789">
    <property type="term" value="C:endoplasmic reticulum membrane"/>
    <property type="evidence" value="ECO:0007669"/>
    <property type="project" value="UniProtKB-SubCell"/>
</dbReference>
<dbReference type="GO" id="GO:0005615">
    <property type="term" value="C:extracellular space"/>
    <property type="evidence" value="ECO:0000318"/>
    <property type="project" value="GO_Central"/>
</dbReference>
<dbReference type="GO" id="GO:0000139">
    <property type="term" value="C:Golgi membrane"/>
    <property type="evidence" value="ECO:0007669"/>
    <property type="project" value="UniProtKB-SubCell"/>
</dbReference>
<dbReference type="GO" id="GO:0005886">
    <property type="term" value="C:plasma membrane"/>
    <property type="evidence" value="ECO:0007669"/>
    <property type="project" value="UniProtKB-SubCell"/>
</dbReference>
<dbReference type="GO" id="GO:0005509">
    <property type="term" value="F:calcium ion binding"/>
    <property type="evidence" value="ECO:0000318"/>
    <property type="project" value="GO_Central"/>
</dbReference>
<dbReference type="GO" id="GO:0140853">
    <property type="term" value="F:cholesterol-protein transferase activity"/>
    <property type="evidence" value="ECO:0000250"/>
    <property type="project" value="UniProtKB"/>
</dbReference>
<dbReference type="GO" id="GO:0005113">
    <property type="term" value="F:patched binding"/>
    <property type="evidence" value="ECO:0000250"/>
    <property type="project" value="UniProtKB"/>
</dbReference>
<dbReference type="GO" id="GO:0008233">
    <property type="term" value="F:peptidase activity"/>
    <property type="evidence" value="ECO:0000250"/>
    <property type="project" value="UniProtKB"/>
</dbReference>
<dbReference type="GO" id="GO:0001708">
    <property type="term" value="P:cell fate specification"/>
    <property type="evidence" value="ECO:0000318"/>
    <property type="project" value="GO_Central"/>
</dbReference>
<dbReference type="GO" id="GO:0007267">
    <property type="term" value="P:cell-cell signaling"/>
    <property type="evidence" value="ECO:0007669"/>
    <property type="project" value="InterPro"/>
</dbReference>
<dbReference type="GO" id="GO:0016539">
    <property type="term" value="P:intein-mediated protein splicing"/>
    <property type="evidence" value="ECO:0007669"/>
    <property type="project" value="InterPro"/>
</dbReference>
<dbReference type="GO" id="GO:0045880">
    <property type="term" value="P:positive regulation of smoothened signaling pathway"/>
    <property type="evidence" value="ECO:0000250"/>
    <property type="project" value="UniProtKB"/>
</dbReference>
<dbReference type="GO" id="GO:0016540">
    <property type="term" value="P:protein autoprocessing"/>
    <property type="evidence" value="ECO:0007669"/>
    <property type="project" value="InterPro"/>
</dbReference>
<dbReference type="GO" id="GO:0010468">
    <property type="term" value="P:regulation of gene expression"/>
    <property type="evidence" value="ECO:0000318"/>
    <property type="project" value="GO_Central"/>
</dbReference>
<dbReference type="GO" id="GO:0097264">
    <property type="term" value="P:self proteolysis"/>
    <property type="evidence" value="ECO:0000250"/>
    <property type="project" value="UniProtKB"/>
</dbReference>
<dbReference type="GO" id="GO:0007224">
    <property type="term" value="P:smoothened signaling pathway"/>
    <property type="evidence" value="ECO:0000318"/>
    <property type="project" value="GO_Central"/>
</dbReference>
<dbReference type="GO" id="GO:0048731">
    <property type="term" value="P:system development"/>
    <property type="evidence" value="ECO:0007669"/>
    <property type="project" value="UniProtKB-ARBA"/>
</dbReference>
<dbReference type="CDD" id="cd00081">
    <property type="entry name" value="Hint"/>
    <property type="match status" value="1"/>
</dbReference>
<dbReference type="FunFam" id="2.170.16.10:FF:000002">
    <property type="entry name" value="Desert hedgehog"/>
    <property type="match status" value="1"/>
</dbReference>
<dbReference type="FunFam" id="3.30.1380.10:FF:000001">
    <property type="entry name" value="Indian hedgehog"/>
    <property type="match status" value="1"/>
</dbReference>
<dbReference type="Gene3D" id="3.30.1380.10">
    <property type="match status" value="1"/>
</dbReference>
<dbReference type="Gene3D" id="2.170.16.10">
    <property type="entry name" value="Hedgehog/Intein (Hint) domain"/>
    <property type="match status" value="1"/>
</dbReference>
<dbReference type="InterPro" id="IPR001657">
    <property type="entry name" value="Hedgehog"/>
</dbReference>
<dbReference type="InterPro" id="IPR001767">
    <property type="entry name" value="Hedgehog_Hint"/>
</dbReference>
<dbReference type="InterPro" id="IPR009045">
    <property type="entry name" value="Hedgehog_sig/DD-Pept_Zn-bd_sf"/>
</dbReference>
<dbReference type="InterPro" id="IPR050387">
    <property type="entry name" value="Hedgehog_Signaling"/>
</dbReference>
<dbReference type="InterPro" id="IPR000320">
    <property type="entry name" value="Hedgehog_signalling_dom"/>
</dbReference>
<dbReference type="InterPro" id="IPR003586">
    <property type="entry name" value="Hint_dom_C"/>
</dbReference>
<dbReference type="InterPro" id="IPR003587">
    <property type="entry name" value="Hint_dom_N"/>
</dbReference>
<dbReference type="InterPro" id="IPR036844">
    <property type="entry name" value="Hint_dom_sf"/>
</dbReference>
<dbReference type="InterPro" id="IPR006141">
    <property type="entry name" value="Intein_N"/>
</dbReference>
<dbReference type="PANTHER" id="PTHR11889:SF56">
    <property type="entry name" value="DESERT HEDGEHOG PROTEIN"/>
    <property type="match status" value="1"/>
</dbReference>
<dbReference type="PANTHER" id="PTHR11889">
    <property type="entry name" value="HEDGEHOG"/>
    <property type="match status" value="1"/>
</dbReference>
<dbReference type="Pfam" id="PF01085">
    <property type="entry name" value="HH_signal"/>
    <property type="match status" value="1"/>
</dbReference>
<dbReference type="Pfam" id="PF01079">
    <property type="entry name" value="Hint"/>
    <property type="match status" value="1"/>
</dbReference>
<dbReference type="PIRSF" id="PIRSF009400">
    <property type="entry name" value="Peptidase_C46"/>
    <property type="match status" value="1"/>
</dbReference>
<dbReference type="PRINTS" id="PR00632">
    <property type="entry name" value="SONICHHOG"/>
</dbReference>
<dbReference type="SMART" id="SM00305">
    <property type="entry name" value="HintC"/>
    <property type="match status" value="1"/>
</dbReference>
<dbReference type="SMART" id="SM00306">
    <property type="entry name" value="HintN"/>
    <property type="match status" value="1"/>
</dbReference>
<dbReference type="SUPFAM" id="SSF55166">
    <property type="entry name" value="Hedgehog/DD-peptidase"/>
    <property type="match status" value="1"/>
</dbReference>
<dbReference type="SUPFAM" id="SSF51294">
    <property type="entry name" value="Hedgehog/intein (Hint) domain"/>
    <property type="match status" value="1"/>
</dbReference>
<dbReference type="PROSITE" id="PS50817">
    <property type="entry name" value="INTEIN_N_TER"/>
    <property type="match status" value="1"/>
</dbReference>